<organism>
    <name type="scientific">Rattus norvegicus</name>
    <name type="common">Rat</name>
    <dbReference type="NCBI Taxonomy" id="10116"/>
    <lineage>
        <taxon>Eukaryota</taxon>
        <taxon>Metazoa</taxon>
        <taxon>Chordata</taxon>
        <taxon>Craniata</taxon>
        <taxon>Vertebrata</taxon>
        <taxon>Euteleostomi</taxon>
        <taxon>Mammalia</taxon>
        <taxon>Eutheria</taxon>
        <taxon>Euarchontoglires</taxon>
        <taxon>Glires</taxon>
        <taxon>Rodentia</taxon>
        <taxon>Myomorpha</taxon>
        <taxon>Muroidea</taxon>
        <taxon>Muridae</taxon>
        <taxon>Murinae</taxon>
        <taxon>Rattus</taxon>
    </lineage>
</organism>
<comment type="function">
    <text evidence="2">Essential component of the SCF (SKP1-CUL1-F-box protein) ubiquitin ligase complex, which mediates the ubiquitination of proteins involved in cell cycle progression, signal transduction and transcription. In the SCF complex, serves as an adapter that links the F-box protein to CUL1. The functional specificity of the SCF complex depends on the F-box protein as substrate recognition component. SCF(BTRC) and SCF(FBXW11) direct ubiquitination of CTNNB1 and participate in Wnt signaling. SCF(FBXW11) directs ubiquitination of phosphorylated NFKBIA. SCF(BTRC) directs ubiquitination of NFKBIB, NFKBIE, ATF4, SMAD3, SMAD4, CDC25A, FBXO5, CEP68 and probably NFKB2. SCF(SKP2) directs ubiquitination of phosphorylated CDKN1B/p27kip and is involved in regulation of G1/S transition. SCF(SKP2) directs ubiquitination of ORC1, CDT1, RBL2, ELF4, CDKN1A, RAG2, FOXO1A, and probably MYC and TAL1. SCF(FBXW7) directs ubiquitination of cyclin E, NOTCH1 released notch intracellular domain (NICD), and probably PSEN1. SCF(FBXW2) directs ubiquitination of GCM1. SCF(FBXO32) directs ubiquitination of MYOD1. SCF(FBXO7) directs ubiquitination of BIRC2 and DLGAP5. SCF(FBXO33) directs ubiquitination of YBX1. SCF(FBXO11) directs ubiquitination of BCL6 and DTL but does not seem to direct ubiquitination of TP53. SCF(BTRC) mediates the ubiquitination of NFKBIA at 'Lys-21' and 'Lys-22'; the degradation frees the associated NFKB1-RELA dimer to translocate into the nucleus and to activate transcription. SCF(CCNF) directs ubiquitination of CCP110. SCF(FBXL3) and SCF(FBXL21) direct ubiquitination of CRY1 and CRY2. SCF(FBXO9) directs ubiquitination of TTI1 and TELO2. SCF(FBXO10) direct ubiquitination of BCL2. Core component of the Cul7-RING(FBXW8) ubiquitin ligase complex, which mediates the ubiquitination and subsequent proteasomal degradation of target proteins. Also acts as a core component of the Cul1-RING(FBXL4) ubiquitin ligase complex, which mediates the ubiquitination and subsequent proteasomal degradation of BNIP3 and BNIP3L (By similarity).</text>
</comment>
<comment type="pathway">
    <text>Protein modification; protein ubiquitination.</text>
</comment>
<comment type="subunit">
    <text evidence="2 3">Interacts with KDM2B, forming heterodimers (By similarity). The KDM2B-SKP1 heterodimeric complex interacts with the PCGF1-BCORL heterodimeric complex to form a homotetrameric polycomb repression complex 1 (PRC1.1) (By similarity). Component of multiple SCF (SKP1-CUL1-F-box) E3 ubiquitin-protein ligase complexes formed of CUL1, SKP1, RBX1 and a variable F-box domain-containing protein as substrate-specific subunit. Component of the SCF(FBXW11) complex containing FBXW11. Component of the SCF(SKP2) complex containing SKP2, in which it interacts directly with SKP1, SKP2 and RBX1. Component of the SCF(FBXW2) complex containing FBXW2. Component of the SCF(FBXO32) complex containing FBXO32. Component of the probable SCF(FBXO7) complex containing FBXO7. Component of the SCF(FBXO10) complex containing FBXO10. Component of the SCF(FBXO11) complex containing FBXO11. Component of the SCF(FBXO25) complex containing FBXO25. Component of the SCF(FBXO33) complex containing FBXO33. Component of the probable SCF(FBXO4) complex containing FBXO4. Component of the SCF(FBXO44) complex, composed of SKP1, CUL1 and FBXO44. Component of the SCF(BTRC) complex, composed of SKP1, CUL1 and BTRC. This complex binds phosphorylated NFKBIA. Part of a SCF complex consisting of CUL1, RBX1, SKP1 and FBXO2. Component of a SCF(SKP2)-like complex containing CUL1, SKP1, TRIM21 and SKP2. Component of the SCF(FBXO17) complex, composed of SKP1, CUL1 and FBXO17. Component of the SCF(FBXO27) complex, composed of SKP1, CUL1 and FBXO27. Component of the SCF(CCNF) complex consisting of CUL1, RBX1, SKP1 and CCNF. Component of the SCF(FBXL3) complex composed of CUL1, SKP1, RBX1 and FBXL3. Component of the SCF(FBXL21) complex composed of CUL1, SKP1, RBX1 and FBXL21. Component of the SCF(FBXO9) composed of CUL1, SKP1, RBX1 and FBXO9. Component of the SCF(FBXW7) composed of CUL1, SKP1, RBX1 and FBXW7. Component of the SCF(FBXO31) complex composed of CUL1, SKP1, RBX1 and FBXO31 (By similarity). Interacts with CEP68 (By similarity). Interacts with NOTCH2 and FBXW15 (By similarity). The SKP1-KDM2A and SKP1-KDM2B complexes interact with UBB (By similarity). Component of the Cul7-RING(FBXW8) complex consisting of CUL7, RBX1, SKP1 and FBXW8; within the complex interacts with FBXW8 (By similarity). Interacts with BCORL1 (By similarity). Interacts with FBXL4 (By similarity).</text>
</comment>
<comment type="interaction">
    <interactant intactId="EBI-919194">
        <id>Q6PEC4</id>
    </interactant>
    <interactant intactId="EBI-15694230">
        <id>G3V802</id>
        <label>Ccna2</label>
    </interactant>
    <organismsDiffer>false</organismsDiffer>
    <experiments>2</experiments>
</comment>
<comment type="interaction">
    <interactant intactId="EBI-919194">
        <id>Q6PEC4</id>
    </interactant>
    <interactant intactId="EBI-847441">
        <id>P39949</id>
        <label>Ccne1</label>
    </interactant>
    <organismsDiffer>false</organismsDiffer>
    <experiments>2</experiments>
</comment>
<comment type="interaction">
    <interactant intactId="EBI-919194">
        <id>Q6PEC4</id>
    </interactant>
    <interactant intactId="EBI-15694427">
        <id>D3ZRK7</id>
        <label>Cdc6</label>
    </interactant>
    <organismsDiffer>false</organismsDiffer>
    <experiments>2</experiments>
</comment>
<comment type="PTM">
    <text evidence="3">Undergoes autophagy-mediated degradation in the liver in a time-dependent manner.</text>
</comment>
<comment type="similarity">
    <text evidence="5">Belongs to the SKP1 family.</text>
</comment>
<name>SKP1_RAT</name>
<protein>
    <recommendedName>
        <fullName>S-phase kinase-associated protein 1</fullName>
    </recommendedName>
    <alternativeName>
        <fullName>Cyclin-A/CDK2-associated protein p19</fullName>
    </alternativeName>
    <alternativeName>
        <fullName>S-phase kinase-associated protein 1A</fullName>
    </alternativeName>
    <alternativeName>
        <fullName>p19A</fullName>
    </alternativeName>
    <alternativeName>
        <fullName>p19skp1</fullName>
    </alternativeName>
</protein>
<reference key="1">
    <citation type="journal article" date="2004" name="Genome Res.">
        <title>The status, quality, and expansion of the NIH full-length cDNA project: the Mammalian Gene Collection (MGC).</title>
        <authorList>
            <consortium name="The MGC Project Team"/>
        </authorList>
    </citation>
    <scope>NUCLEOTIDE SEQUENCE [LARGE SCALE MRNA]</scope>
    <source>
        <tissue>Pituitary</tissue>
    </source>
</reference>
<reference key="2">
    <citation type="journal article" date="2012" name="Nat. Commun.">
        <title>Quantitative maps of protein phosphorylation sites across 14 different rat organs and tissues.</title>
        <authorList>
            <person name="Lundby A."/>
            <person name="Secher A."/>
            <person name="Lage K."/>
            <person name="Nordsborg N.B."/>
            <person name="Dmytriyev A."/>
            <person name="Lundby C."/>
            <person name="Olsen J.V."/>
        </authorList>
    </citation>
    <scope>PHOSPHORYLATION [LARGE SCALE ANALYSIS] AT THR-131</scope>
    <scope>IDENTIFICATION BY MASS SPECTROMETRY [LARGE SCALE ANALYSIS]</scope>
</reference>
<evidence type="ECO:0000250" key="1"/>
<evidence type="ECO:0000250" key="2">
    <source>
        <dbReference type="UniProtKB" id="P63208"/>
    </source>
</evidence>
<evidence type="ECO:0000250" key="3">
    <source>
        <dbReference type="UniProtKB" id="Q9WTX5"/>
    </source>
</evidence>
<evidence type="ECO:0000256" key="4">
    <source>
        <dbReference type="SAM" id="MobiDB-lite"/>
    </source>
</evidence>
<evidence type="ECO:0000305" key="5"/>
<evidence type="ECO:0007744" key="6">
    <source>
    </source>
</evidence>
<sequence>MPTIKLQSSDGEIFEVDVEIAKQSVTIKTMLEDLGMDDEGDDDPVPLPNVNAAILKKVIQWCTHHKDDPPPPEDDENKEKRTDDIPVWDQEFLKVDQGTLFELILAANYLDIKGLLDVTCKTVANMIKGKTPEEIRKTFNIKNDFTEEEEAQVRKENQWCEEK</sequence>
<gene>
    <name type="primary">Skp1</name>
    <name type="synonym">Skp1a</name>
</gene>
<keyword id="KW-1017">Isopeptide bond</keyword>
<keyword id="KW-0597">Phosphoprotein</keyword>
<keyword id="KW-1185">Reference proteome</keyword>
<keyword id="KW-0832">Ubl conjugation</keyword>
<keyword id="KW-0833">Ubl conjugation pathway</keyword>
<proteinExistence type="evidence at protein level"/>
<dbReference type="EMBL" id="BC058152">
    <property type="protein sequence ID" value="AAH58152.1"/>
    <property type="molecule type" value="mRNA"/>
</dbReference>
<dbReference type="RefSeq" id="NP_001007609.1">
    <property type="nucleotide sequence ID" value="NM_001007608.2"/>
</dbReference>
<dbReference type="RefSeq" id="XP_063124660.1">
    <property type="nucleotide sequence ID" value="XM_063268590.1"/>
</dbReference>
<dbReference type="RefSeq" id="XP_063124661.1">
    <property type="nucleotide sequence ID" value="XM_063268591.1"/>
</dbReference>
<dbReference type="SMR" id="Q6PEC4"/>
<dbReference type="BioGRID" id="252084">
    <property type="interactions" value="3"/>
</dbReference>
<dbReference type="DIP" id="DIP-29863N"/>
<dbReference type="FunCoup" id="Q6PEC4">
    <property type="interactions" value="4122"/>
</dbReference>
<dbReference type="IntAct" id="Q6PEC4">
    <property type="interactions" value="8"/>
</dbReference>
<dbReference type="STRING" id="10116.ENSRNOP00000073214"/>
<dbReference type="iPTMnet" id="Q6PEC4"/>
<dbReference type="PhosphoSitePlus" id="Q6PEC4"/>
<dbReference type="SwissPalm" id="Q6PEC4"/>
<dbReference type="jPOST" id="Q6PEC4"/>
<dbReference type="PaxDb" id="10116-ENSRNOP00000007676"/>
<dbReference type="GeneID" id="287280"/>
<dbReference type="KEGG" id="rno:287280"/>
<dbReference type="UCSC" id="RGD:1359648">
    <property type="organism name" value="rat"/>
</dbReference>
<dbReference type="AGR" id="RGD:1359648"/>
<dbReference type="CTD" id="6500"/>
<dbReference type="RGD" id="1359648">
    <property type="gene designation" value="Skp1"/>
</dbReference>
<dbReference type="VEuPathDB" id="HostDB:ENSRNOG00000005828"/>
<dbReference type="eggNOG" id="KOG1724">
    <property type="taxonomic scope" value="Eukaryota"/>
</dbReference>
<dbReference type="HOGENOM" id="CLU_059252_7_0_1"/>
<dbReference type="InParanoid" id="Q6PEC4"/>
<dbReference type="PhylomeDB" id="Q6PEC4"/>
<dbReference type="TreeFam" id="TF354233"/>
<dbReference type="Reactome" id="R-RNO-1169091">
    <property type="pathway name" value="Activation of NF-kappaB in B cells"/>
</dbReference>
<dbReference type="Reactome" id="R-RNO-1170546">
    <property type="pathway name" value="Prolactin receptor signaling"/>
</dbReference>
<dbReference type="Reactome" id="R-RNO-174113">
    <property type="pathway name" value="SCF-beta-TrCP mediated degradation of Emi1"/>
</dbReference>
<dbReference type="Reactome" id="R-RNO-187577">
    <property type="pathway name" value="SCF(Skp2)-mediated degradation of p27/p21"/>
</dbReference>
<dbReference type="Reactome" id="R-RNO-195253">
    <property type="pathway name" value="Degradation of beta-catenin by the destruction complex"/>
</dbReference>
<dbReference type="Reactome" id="R-RNO-2565942">
    <property type="pathway name" value="Regulation of PLK1 Activity at G2/M Transition"/>
</dbReference>
<dbReference type="Reactome" id="R-RNO-5607761">
    <property type="pathway name" value="Dectin-1 mediated noncanonical NF-kB signaling"/>
</dbReference>
<dbReference type="Reactome" id="R-RNO-5610780">
    <property type="pathway name" value="Degradation of GLI1 by the proteasome"/>
</dbReference>
<dbReference type="Reactome" id="R-RNO-5610785">
    <property type="pathway name" value="GLI3 is processed to GLI3R by the proteasome"/>
</dbReference>
<dbReference type="Reactome" id="R-RNO-5676590">
    <property type="pathway name" value="NIK--&gt;noncanonical NF-kB signaling"/>
</dbReference>
<dbReference type="Reactome" id="R-RNO-68949">
    <property type="pathway name" value="Orc1 removal from chromatin"/>
</dbReference>
<dbReference type="Reactome" id="R-RNO-69231">
    <property type="pathway name" value="Cyclin D associated events in G1"/>
</dbReference>
<dbReference type="Reactome" id="R-RNO-8854050">
    <property type="pathway name" value="FBXL7 down-regulates AURKA during mitotic entry and in early mitosis"/>
</dbReference>
<dbReference type="Reactome" id="R-RNO-8951664">
    <property type="pathway name" value="Neddylation"/>
</dbReference>
<dbReference type="Reactome" id="R-RNO-9020702">
    <property type="pathway name" value="Interleukin-1 signaling"/>
</dbReference>
<dbReference type="Reactome" id="R-RNO-917937">
    <property type="pathway name" value="Iron uptake and transport"/>
</dbReference>
<dbReference type="Reactome" id="R-RNO-9762114">
    <property type="pathway name" value="GSK3B and BTRC:CUL1-mediated-degradation of NFE2L2"/>
</dbReference>
<dbReference type="Reactome" id="R-RNO-983168">
    <property type="pathway name" value="Antigen processing: Ubiquitination &amp; Proteasome degradation"/>
</dbReference>
<dbReference type="UniPathway" id="UPA00143"/>
<dbReference type="PRO" id="PR:Q6PEC4"/>
<dbReference type="Proteomes" id="UP000002494">
    <property type="component" value="Chromosome 10"/>
</dbReference>
<dbReference type="Bgee" id="ENSRNOG00000005828">
    <property type="expression patterns" value="Expressed in cerebellum and 20 other cell types or tissues"/>
</dbReference>
<dbReference type="ExpressionAtlas" id="Q6PEC4">
    <property type="expression patterns" value="baseline and differential"/>
</dbReference>
<dbReference type="GO" id="GO:0005813">
    <property type="term" value="C:centrosome"/>
    <property type="evidence" value="ECO:0000266"/>
    <property type="project" value="RGD"/>
</dbReference>
<dbReference type="GO" id="GO:0031467">
    <property type="term" value="C:Cul7-RING ubiquitin ligase complex"/>
    <property type="evidence" value="ECO:0000250"/>
    <property type="project" value="UniProtKB"/>
</dbReference>
<dbReference type="GO" id="GO:0005737">
    <property type="term" value="C:cytoplasm"/>
    <property type="evidence" value="ECO:0000266"/>
    <property type="project" value="RGD"/>
</dbReference>
<dbReference type="GO" id="GO:0005829">
    <property type="term" value="C:cytosol"/>
    <property type="evidence" value="ECO:0000250"/>
    <property type="project" value="UniProtKB"/>
</dbReference>
<dbReference type="GO" id="GO:0005921">
    <property type="term" value="C:gap junction"/>
    <property type="evidence" value="ECO:0000314"/>
    <property type="project" value="RGD"/>
</dbReference>
<dbReference type="GO" id="GO:0005634">
    <property type="term" value="C:nucleus"/>
    <property type="evidence" value="ECO:0000266"/>
    <property type="project" value="RGD"/>
</dbReference>
<dbReference type="GO" id="GO:0031519">
    <property type="term" value="C:PcG protein complex"/>
    <property type="evidence" value="ECO:0000266"/>
    <property type="project" value="RGD"/>
</dbReference>
<dbReference type="GO" id="GO:0019005">
    <property type="term" value="C:SCF ubiquitin ligase complex"/>
    <property type="evidence" value="ECO:0000250"/>
    <property type="project" value="UniProtKB"/>
</dbReference>
<dbReference type="GO" id="GO:0008013">
    <property type="term" value="F:beta-catenin binding"/>
    <property type="evidence" value="ECO:0000266"/>
    <property type="project" value="RGD"/>
</dbReference>
<dbReference type="GO" id="GO:0097602">
    <property type="term" value="F:cullin family protein binding"/>
    <property type="evidence" value="ECO:0000266"/>
    <property type="project" value="RGD"/>
</dbReference>
<dbReference type="GO" id="GO:1990444">
    <property type="term" value="F:F-box domain binding"/>
    <property type="evidence" value="ECO:0000266"/>
    <property type="project" value="RGD"/>
</dbReference>
<dbReference type="GO" id="GO:0140677">
    <property type="term" value="F:molecular function activator activity"/>
    <property type="evidence" value="ECO:0000266"/>
    <property type="project" value="RGD"/>
</dbReference>
<dbReference type="GO" id="GO:0019904">
    <property type="term" value="F:protein domain specific binding"/>
    <property type="evidence" value="ECO:0000266"/>
    <property type="project" value="RGD"/>
</dbReference>
<dbReference type="GO" id="GO:0160072">
    <property type="term" value="F:ubiquitin ligase complex scaffold activity"/>
    <property type="evidence" value="ECO:0000266"/>
    <property type="project" value="RGD"/>
</dbReference>
<dbReference type="GO" id="GO:1990756">
    <property type="term" value="F:ubiquitin-like ligase-substrate adaptor activity"/>
    <property type="evidence" value="ECO:0000266"/>
    <property type="project" value="RGD"/>
</dbReference>
<dbReference type="GO" id="GO:0006338">
    <property type="term" value="P:chromatin remodeling"/>
    <property type="evidence" value="ECO:0000266"/>
    <property type="project" value="RGD"/>
</dbReference>
<dbReference type="GO" id="GO:0051457">
    <property type="term" value="P:maintenance of protein location in nucleus"/>
    <property type="evidence" value="ECO:0000266"/>
    <property type="project" value="RGD"/>
</dbReference>
<dbReference type="GO" id="GO:0043161">
    <property type="term" value="P:proteasome-mediated ubiquitin-dependent protein catabolic process"/>
    <property type="evidence" value="ECO:0000266"/>
    <property type="project" value="RGD"/>
</dbReference>
<dbReference type="GO" id="GO:0070936">
    <property type="term" value="P:protein K48-linked ubiquitination"/>
    <property type="evidence" value="ECO:0000266"/>
    <property type="project" value="RGD"/>
</dbReference>
<dbReference type="GO" id="GO:0006513">
    <property type="term" value="P:protein monoubiquitination"/>
    <property type="evidence" value="ECO:0000266"/>
    <property type="project" value="RGD"/>
</dbReference>
<dbReference type="GO" id="GO:0000209">
    <property type="term" value="P:protein polyubiquitination"/>
    <property type="evidence" value="ECO:0000266"/>
    <property type="project" value="RGD"/>
</dbReference>
<dbReference type="GO" id="GO:0016567">
    <property type="term" value="P:protein ubiquitination"/>
    <property type="evidence" value="ECO:0000266"/>
    <property type="project" value="RGD"/>
</dbReference>
<dbReference type="GO" id="GO:0031146">
    <property type="term" value="P:SCF-dependent proteasomal ubiquitin-dependent protein catabolic process"/>
    <property type="evidence" value="ECO:0000250"/>
    <property type="project" value="UniProtKB"/>
</dbReference>
<dbReference type="CDD" id="cd18322">
    <property type="entry name" value="BTB_POZ_SKP1"/>
    <property type="match status" value="1"/>
</dbReference>
<dbReference type="FunFam" id="3.30.710.10:FF:000270">
    <property type="entry name" value="S-phase kinase-associated protein 1"/>
    <property type="match status" value="1"/>
</dbReference>
<dbReference type="Gene3D" id="3.30.710.10">
    <property type="entry name" value="Potassium Channel Kv1.1, Chain A"/>
    <property type="match status" value="1"/>
</dbReference>
<dbReference type="InterPro" id="IPR016897">
    <property type="entry name" value="SKP1"/>
</dbReference>
<dbReference type="InterPro" id="IPR001232">
    <property type="entry name" value="SKP1-like"/>
</dbReference>
<dbReference type="InterPro" id="IPR036296">
    <property type="entry name" value="SKP1-like_dim_sf"/>
</dbReference>
<dbReference type="InterPro" id="IPR011333">
    <property type="entry name" value="SKP1/BTB/POZ_sf"/>
</dbReference>
<dbReference type="InterPro" id="IPR016072">
    <property type="entry name" value="Skp1_comp_dimer"/>
</dbReference>
<dbReference type="InterPro" id="IPR016073">
    <property type="entry name" value="Skp1_comp_POZ"/>
</dbReference>
<dbReference type="PANTHER" id="PTHR11165">
    <property type="entry name" value="SKP1"/>
    <property type="match status" value="1"/>
</dbReference>
<dbReference type="Pfam" id="PF01466">
    <property type="entry name" value="Skp1"/>
    <property type="match status" value="1"/>
</dbReference>
<dbReference type="Pfam" id="PF03931">
    <property type="entry name" value="Skp1_POZ"/>
    <property type="match status" value="1"/>
</dbReference>
<dbReference type="PIRSF" id="PIRSF028729">
    <property type="entry name" value="E3_ubiquit_lig_SCF_Skp"/>
    <property type="match status" value="1"/>
</dbReference>
<dbReference type="SMART" id="SM00512">
    <property type="entry name" value="Skp1"/>
    <property type="match status" value="1"/>
</dbReference>
<dbReference type="SUPFAM" id="SSF54695">
    <property type="entry name" value="POZ domain"/>
    <property type="match status" value="1"/>
</dbReference>
<dbReference type="SUPFAM" id="SSF81382">
    <property type="entry name" value="Skp1 dimerisation domain-like"/>
    <property type="match status" value="1"/>
</dbReference>
<accession>Q6PEC4</accession>
<feature type="chain" id="PRO_0000187253" description="S-phase kinase-associated protein 1">
    <location>
        <begin position="1"/>
        <end position="163"/>
    </location>
</feature>
<feature type="region of interest" description="Disordered" evidence="4">
    <location>
        <begin position="63"/>
        <end position="83"/>
    </location>
</feature>
<feature type="region of interest" description="Interaction with the F-box domain of F-box proteins" evidence="1">
    <location>
        <begin position="104"/>
        <end position="163"/>
    </location>
</feature>
<feature type="modified residue" description="Phosphothreonine" evidence="6">
    <location>
        <position position="131"/>
    </location>
</feature>
<feature type="cross-link" description="Glycyl lysine isopeptide (Lys-Gly) (interchain with G-Cter in SUMO1)" evidence="2">
    <location>
        <position position="142"/>
    </location>
</feature>